<protein>
    <recommendedName>
        <fullName evidence="1">Phospho-N-acetylmuramoyl-pentapeptide-transferase</fullName>
        <ecNumber evidence="1">2.7.8.13</ecNumber>
    </recommendedName>
    <alternativeName>
        <fullName evidence="1">UDP-MurNAc-pentapeptide phosphotransferase</fullName>
    </alternativeName>
</protein>
<evidence type="ECO:0000255" key="1">
    <source>
        <dbReference type="HAMAP-Rule" id="MF_00038"/>
    </source>
</evidence>
<sequence length="360" mass="38567">MLMLLTFFAEHMTPLNVFRYITFRTGGAMITSALIVFLFGPSIINSLRVRQGKGQPIRADGPQTHFKKAGTPTMGGLMIMTGILVSCLLWANLASVYVWVVLLVTVGFGAIGFYDDYLKVTKQSDKGFSGKARLGIEFLIAAVAAFVIMRAGQEPFSSSLTFPFAKQFVVNLSWFFIPFAAFVMVGAGNAVNLTDGLDGLAIVPVMVAAASFGFIAYLSGNAIFADYLQIHFVPGTGELAVVLGAVIGAGLGFLWFNAPPAAIFMGDTGSLALGGMLGTVAVATKHEIVLAIIGGLFVVEALSVIIQVGSFKLTGKRVFLMAPIHHHFEKKGWTESQVVIRFWIVAIILAMIGLSTLKLR</sequence>
<comment type="function">
    <text evidence="1">Catalyzes the initial step of the lipid cycle reactions in the biosynthesis of the cell wall peptidoglycan: transfers peptidoglycan precursor phospho-MurNAc-pentapeptide from UDP-MurNAc-pentapeptide onto the lipid carrier undecaprenyl phosphate, yielding undecaprenyl-pyrophosphoryl-MurNAc-pentapeptide, known as lipid I.</text>
</comment>
<comment type="catalytic activity">
    <reaction evidence="1">
        <text>UDP-N-acetyl-alpha-D-muramoyl-L-alanyl-gamma-D-glutamyl-meso-2,6-diaminopimeloyl-D-alanyl-D-alanine + di-trans,octa-cis-undecaprenyl phosphate = di-trans,octa-cis-undecaprenyl diphospho-N-acetyl-alpha-D-muramoyl-L-alanyl-D-glutamyl-meso-2,6-diaminopimeloyl-D-alanyl-D-alanine + UMP</text>
        <dbReference type="Rhea" id="RHEA:28386"/>
        <dbReference type="ChEBI" id="CHEBI:57865"/>
        <dbReference type="ChEBI" id="CHEBI:60392"/>
        <dbReference type="ChEBI" id="CHEBI:61386"/>
        <dbReference type="ChEBI" id="CHEBI:61387"/>
        <dbReference type="EC" id="2.7.8.13"/>
    </reaction>
</comment>
<comment type="cofactor">
    <cofactor evidence="1">
        <name>Mg(2+)</name>
        <dbReference type="ChEBI" id="CHEBI:18420"/>
    </cofactor>
</comment>
<comment type="pathway">
    <text evidence="1">Cell wall biogenesis; peptidoglycan biosynthesis.</text>
</comment>
<comment type="subcellular location">
    <subcellularLocation>
        <location evidence="1">Cell inner membrane</location>
        <topology evidence="1">Multi-pass membrane protein</topology>
    </subcellularLocation>
</comment>
<comment type="similarity">
    <text evidence="1">Belongs to the glycosyltransferase 4 family. MraY subfamily.</text>
</comment>
<proteinExistence type="inferred from homology"/>
<dbReference type="EC" id="2.7.8.13" evidence="1"/>
<dbReference type="EMBL" id="CP000758">
    <property type="protein sequence ID" value="ABS14457.1"/>
    <property type="molecule type" value="Genomic_DNA"/>
</dbReference>
<dbReference type="RefSeq" id="WP_012091745.1">
    <property type="nucleotide sequence ID" value="NC_009667.1"/>
</dbReference>
<dbReference type="SMR" id="A6WZQ3"/>
<dbReference type="STRING" id="439375.Oant_1741"/>
<dbReference type="KEGG" id="oan:Oant_1741"/>
<dbReference type="eggNOG" id="COG0472">
    <property type="taxonomic scope" value="Bacteria"/>
</dbReference>
<dbReference type="HOGENOM" id="CLU_023982_0_0_5"/>
<dbReference type="PhylomeDB" id="A6WZQ3"/>
<dbReference type="UniPathway" id="UPA00219"/>
<dbReference type="Proteomes" id="UP000002301">
    <property type="component" value="Chromosome 1"/>
</dbReference>
<dbReference type="GO" id="GO:0005886">
    <property type="term" value="C:plasma membrane"/>
    <property type="evidence" value="ECO:0007669"/>
    <property type="project" value="UniProtKB-SubCell"/>
</dbReference>
<dbReference type="GO" id="GO:0046872">
    <property type="term" value="F:metal ion binding"/>
    <property type="evidence" value="ECO:0007669"/>
    <property type="project" value="UniProtKB-KW"/>
</dbReference>
<dbReference type="GO" id="GO:0008963">
    <property type="term" value="F:phospho-N-acetylmuramoyl-pentapeptide-transferase activity"/>
    <property type="evidence" value="ECO:0007669"/>
    <property type="project" value="UniProtKB-UniRule"/>
</dbReference>
<dbReference type="GO" id="GO:0051992">
    <property type="term" value="F:UDP-N-acetylmuramoyl-L-alanyl-D-glutamyl-meso-2,6-diaminopimelyl-D-alanyl-D-alanine:undecaprenyl-phosphate transferase activity"/>
    <property type="evidence" value="ECO:0007669"/>
    <property type="project" value="RHEA"/>
</dbReference>
<dbReference type="GO" id="GO:0051301">
    <property type="term" value="P:cell division"/>
    <property type="evidence" value="ECO:0007669"/>
    <property type="project" value="UniProtKB-KW"/>
</dbReference>
<dbReference type="GO" id="GO:0071555">
    <property type="term" value="P:cell wall organization"/>
    <property type="evidence" value="ECO:0007669"/>
    <property type="project" value="UniProtKB-KW"/>
</dbReference>
<dbReference type="GO" id="GO:0009252">
    <property type="term" value="P:peptidoglycan biosynthetic process"/>
    <property type="evidence" value="ECO:0007669"/>
    <property type="project" value="UniProtKB-UniRule"/>
</dbReference>
<dbReference type="GO" id="GO:0008360">
    <property type="term" value="P:regulation of cell shape"/>
    <property type="evidence" value="ECO:0007669"/>
    <property type="project" value="UniProtKB-KW"/>
</dbReference>
<dbReference type="CDD" id="cd06852">
    <property type="entry name" value="GT_MraY"/>
    <property type="match status" value="1"/>
</dbReference>
<dbReference type="HAMAP" id="MF_00038">
    <property type="entry name" value="MraY"/>
    <property type="match status" value="1"/>
</dbReference>
<dbReference type="InterPro" id="IPR000715">
    <property type="entry name" value="Glycosyl_transferase_4"/>
</dbReference>
<dbReference type="InterPro" id="IPR003524">
    <property type="entry name" value="PNAcMuramoyl-5peptid_Trfase"/>
</dbReference>
<dbReference type="InterPro" id="IPR018480">
    <property type="entry name" value="PNAcMuramoyl-5peptid_Trfase_CS"/>
</dbReference>
<dbReference type="NCBIfam" id="TIGR00445">
    <property type="entry name" value="mraY"/>
    <property type="match status" value="1"/>
</dbReference>
<dbReference type="PANTHER" id="PTHR22926">
    <property type="entry name" value="PHOSPHO-N-ACETYLMURAMOYL-PENTAPEPTIDE-TRANSFERASE"/>
    <property type="match status" value="1"/>
</dbReference>
<dbReference type="PANTHER" id="PTHR22926:SF5">
    <property type="entry name" value="PHOSPHO-N-ACETYLMURAMOYL-PENTAPEPTIDE-TRANSFERASE HOMOLOG"/>
    <property type="match status" value="1"/>
</dbReference>
<dbReference type="Pfam" id="PF00953">
    <property type="entry name" value="Glycos_transf_4"/>
    <property type="match status" value="1"/>
</dbReference>
<dbReference type="Pfam" id="PF10555">
    <property type="entry name" value="MraY_sig1"/>
    <property type="match status" value="1"/>
</dbReference>
<dbReference type="PROSITE" id="PS01347">
    <property type="entry name" value="MRAY_1"/>
    <property type="match status" value="1"/>
</dbReference>
<dbReference type="PROSITE" id="PS01348">
    <property type="entry name" value="MRAY_2"/>
    <property type="match status" value="1"/>
</dbReference>
<accession>A6WZQ3</accession>
<keyword id="KW-0131">Cell cycle</keyword>
<keyword id="KW-0132">Cell division</keyword>
<keyword id="KW-0997">Cell inner membrane</keyword>
<keyword id="KW-1003">Cell membrane</keyword>
<keyword id="KW-0133">Cell shape</keyword>
<keyword id="KW-0961">Cell wall biogenesis/degradation</keyword>
<keyword id="KW-0460">Magnesium</keyword>
<keyword id="KW-0472">Membrane</keyword>
<keyword id="KW-0479">Metal-binding</keyword>
<keyword id="KW-0573">Peptidoglycan synthesis</keyword>
<keyword id="KW-1185">Reference proteome</keyword>
<keyword id="KW-0808">Transferase</keyword>
<keyword id="KW-0812">Transmembrane</keyword>
<keyword id="KW-1133">Transmembrane helix</keyword>
<feature type="chain" id="PRO_1000003024" description="Phospho-N-acetylmuramoyl-pentapeptide-transferase">
    <location>
        <begin position="1"/>
        <end position="360"/>
    </location>
</feature>
<feature type="transmembrane region" description="Helical" evidence="1">
    <location>
        <begin position="27"/>
        <end position="47"/>
    </location>
</feature>
<feature type="transmembrane region" description="Helical" evidence="1">
    <location>
        <begin position="71"/>
        <end position="91"/>
    </location>
</feature>
<feature type="transmembrane region" description="Helical" evidence="1">
    <location>
        <begin position="93"/>
        <end position="113"/>
    </location>
</feature>
<feature type="transmembrane region" description="Helical" evidence="1">
    <location>
        <begin position="128"/>
        <end position="148"/>
    </location>
</feature>
<feature type="transmembrane region" description="Helical" evidence="1">
    <location>
        <begin position="168"/>
        <end position="188"/>
    </location>
</feature>
<feature type="transmembrane region" description="Helical" evidence="1">
    <location>
        <begin position="199"/>
        <end position="219"/>
    </location>
</feature>
<feature type="transmembrane region" description="Helical" evidence="1">
    <location>
        <begin position="239"/>
        <end position="259"/>
    </location>
</feature>
<feature type="transmembrane region" description="Helical" evidence="1">
    <location>
        <begin position="262"/>
        <end position="282"/>
    </location>
</feature>
<feature type="transmembrane region" description="Helical" evidence="1">
    <location>
        <begin position="288"/>
        <end position="308"/>
    </location>
</feature>
<feature type="transmembrane region" description="Helical" evidence="1">
    <location>
        <begin position="337"/>
        <end position="357"/>
    </location>
</feature>
<name>MRAY_BRUA4</name>
<reference key="1">
    <citation type="journal article" date="2011" name="J. Bacteriol.">
        <title>Genome of Ochrobactrum anthropi ATCC 49188 T, a versatile opportunistic pathogen and symbiont of several eukaryotic hosts.</title>
        <authorList>
            <person name="Chain P.S."/>
            <person name="Lang D.M."/>
            <person name="Comerci D.J."/>
            <person name="Malfatti S.A."/>
            <person name="Vergez L.M."/>
            <person name="Shin M."/>
            <person name="Ugalde R.A."/>
            <person name="Garcia E."/>
            <person name="Tolmasky M.E."/>
        </authorList>
    </citation>
    <scope>NUCLEOTIDE SEQUENCE [LARGE SCALE GENOMIC DNA]</scope>
    <source>
        <strain>ATCC 49188 / DSM 6882 / CCUG 24695 / JCM 21032 / LMG 3331 / NBRC 15819 / NCTC 12168 / Alc 37</strain>
    </source>
</reference>
<gene>
    <name evidence="1" type="primary">mraY</name>
    <name type="ordered locus">Oant_1741</name>
</gene>
<organism>
    <name type="scientific">Brucella anthropi (strain ATCC 49188 / DSM 6882 / CCUG 24695 / JCM 21032 / LMG 3331 / NBRC 15819 / NCTC 12168 / Alc 37)</name>
    <name type="common">Ochrobactrum anthropi</name>
    <dbReference type="NCBI Taxonomy" id="439375"/>
    <lineage>
        <taxon>Bacteria</taxon>
        <taxon>Pseudomonadati</taxon>
        <taxon>Pseudomonadota</taxon>
        <taxon>Alphaproteobacteria</taxon>
        <taxon>Hyphomicrobiales</taxon>
        <taxon>Brucellaceae</taxon>
        <taxon>Brucella/Ochrobactrum group</taxon>
        <taxon>Brucella</taxon>
    </lineage>
</organism>